<keyword id="KW-0614">Plasmid</keyword>
<keyword id="KW-0616">Plasmid partition</keyword>
<name>REP1_KLULC</name>
<feature type="chain" id="PRO_0000150893" description="Trans-acting factor B">
    <location>
        <begin position="1"/>
        <end position="415"/>
    </location>
</feature>
<dbReference type="EMBL" id="X03961">
    <property type="protein sequence ID" value="CAA27593.1"/>
    <property type="molecule type" value="Genomic_DNA"/>
</dbReference>
<dbReference type="PIR" id="S28088">
    <property type="entry name" value="S28088"/>
</dbReference>
<dbReference type="GO" id="GO:0030541">
    <property type="term" value="P:plasmid partitioning"/>
    <property type="evidence" value="ECO:0007669"/>
    <property type="project" value="UniProtKB-KW"/>
</dbReference>
<dbReference type="InterPro" id="IPR008897">
    <property type="entry name" value="Rep_fungi"/>
</dbReference>
<dbReference type="Pfam" id="PF05797">
    <property type="entry name" value="Rep_4"/>
    <property type="match status" value="1"/>
</dbReference>
<gene>
    <name type="primary">B</name>
</gene>
<sequence>MSAPSESSETAAPLLSDLSPEEQKGVQQVREIYRALLDSFKFKNEYNAYDPLNNTIITQHGSYEVPEAFAQCTYLAQIYVSYKINSLPYQTYIKDLEWISPAEVYKLIMERLQKNKYFLRKQVQAMEKIKVLLCPSPELLENNYVDDNLKISSHKVTQRHPEKVYDLMTYQEIADGIDDFFSLLEMPNLSLAFVNKTSIKLNISCSGANNHIGSFIGRTARTIRHYWIKNAILEFADYKKKTVPYPFVGPPRDPGLFEHIVDDCSTGAPINWDDFSIDSYASYVTVMEHLEEVVELTDRHRRVIEYLGMYIASDLHEEGKLTRARKLDRTTLFHTVRDVLLHDGSYTRHKGVRCLDNGSVRVSIRLKHRQLTATWIELEPIIENGEVKDVMFKLSTRVQYTEENENETRPESSSE</sequence>
<comment type="function">
    <text>Plasmid partition require REP1, REP2, and a cis-acting DNA sequence (known as STB). REP1 may act by intercalating in the yeast nuclear matrix and binding STB either directly or via REP2.</text>
</comment>
<accession>P13775</accession>
<reference key="1">
    <citation type="journal article" date="1986" name="Nucleic Acids Res.">
        <title>Sequence organization of the circular plasmid pKD1 from the yeast Kluyveromyces drosophilarum.</title>
        <authorList>
            <person name="Chen X.J."/>
            <person name="Saliola M."/>
            <person name="Falcone C."/>
            <person name="Bianchi M.M."/>
            <person name="Fukuhara H."/>
        </authorList>
    </citation>
    <scope>NUCLEOTIDE SEQUENCE [GENOMIC DNA]</scope>
    <source>
        <strain>ATCC 56496 / CBS 2105 / CLIB 601 / NRRL Y-8278</strain>
    </source>
</reference>
<proteinExistence type="predicted"/>
<geneLocation type="plasmid">
    <name>pKD1</name>
</geneLocation>
<protein>
    <recommendedName>
        <fullName>Trans-acting factor B</fullName>
    </recommendedName>
    <alternativeName>
        <fullName>REP1</fullName>
    </alternativeName>
</protein>
<organism>
    <name type="scientific">Kluyveromyces lactis</name>
    <name type="common">Yeast</name>
    <name type="synonym">Candida sphaerica</name>
    <dbReference type="NCBI Taxonomy" id="28985"/>
    <lineage>
        <taxon>Eukaryota</taxon>
        <taxon>Fungi</taxon>
        <taxon>Dikarya</taxon>
        <taxon>Ascomycota</taxon>
        <taxon>Saccharomycotina</taxon>
        <taxon>Saccharomycetes</taxon>
        <taxon>Saccharomycetales</taxon>
        <taxon>Saccharomycetaceae</taxon>
        <taxon>Kluyveromyces</taxon>
    </lineage>
</organism>